<keyword id="KW-0002">3D-structure</keyword>
<keyword id="KW-0028">Amino-acid biosynthesis</keyword>
<keyword id="KW-0057">Aromatic amino acid biosynthesis</keyword>
<keyword id="KW-0067">ATP-binding</keyword>
<keyword id="KW-0963">Cytoplasm</keyword>
<keyword id="KW-0418">Kinase</keyword>
<keyword id="KW-0460">Magnesium</keyword>
<keyword id="KW-0479">Metal-binding</keyword>
<keyword id="KW-0547">Nucleotide-binding</keyword>
<keyword id="KW-1185">Reference proteome</keyword>
<keyword id="KW-0808">Transferase</keyword>
<name>AROK_COXBU</name>
<gene>
    <name evidence="1" type="primary">aroK</name>
    <name type="ordered locus">CBU_1892</name>
</gene>
<sequence>MKKNLTNIYLIGLMGAGKTSVGSQLAKLTKRILYDSDKEIEKRTGADIAWIFEMEGEAGFRRREREMIEALCKLDNIILATGGGVVLDEKNRQQISETGVVIYLTASIDTQLKRIGQKGEMRRPLFIKNNSKEKLQQLNEIRKPLYQAMADLVYPTDDLNPRQLATQILVDIKQTYSDL</sequence>
<evidence type="ECO:0000255" key="1">
    <source>
        <dbReference type="HAMAP-Rule" id="MF_00109"/>
    </source>
</evidence>
<evidence type="ECO:0007829" key="2">
    <source>
        <dbReference type="PDB" id="3TRF"/>
    </source>
</evidence>
<proteinExistence type="evidence at protein level"/>
<accession>Q83AJ3</accession>
<organism>
    <name type="scientific">Coxiella burnetii (strain RSA 493 / Nine Mile phase I)</name>
    <dbReference type="NCBI Taxonomy" id="227377"/>
    <lineage>
        <taxon>Bacteria</taxon>
        <taxon>Pseudomonadati</taxon>
        <taxon>Pseudomonadota</taxon>
        <taxon>Gammaproteobacteria</taxon>
        <taxon>Legionellales</taxon>
        <taxon>Coxiellaceae</taxon>
        <taxon>Coxiella</taxon>
    </lineage>
</organism>
<comment type="function">
    <text evidence="1">Catalyzes the specific phosphorylation of the 3-hydroxyl group of shikimic acid using ATP as a cosubstrate.</text>
</comment>
<comment type="catalytic activity">
    <reaction evidence="1">
        <text>shikimate + ATP = 3-phosphoshikimate + ADP + H(+)</text>
        <dbReference type="Rhea" id="RHEA:13121"/>
        <dbReference type="ChEBI" id="CHEBI:15378"/>
        <dbReference type="ChEBI" id="CHEBI:30616"/>
        <dbReference type="ChEBI" id="CHEBI:36208"/>
        <dbReference type="ChEBI" id="CHEBI:145989"/>
        <dbReference type="ChEBI" id="CHEBI:456216"/>
        <dbReference type="EC" id="2.7.1.71"/>
    </reaction>
</comment>
<comment type="cofactor">
    <cofactor evidence="1">
        <name>Mg(2+)</name>
        <dbReference type="ChEBI" id="CHEBI:18420"/>
    </cofactor>
    <text evidence="1">Binds 1 Mg(2+) ion per subunit.</text>
</comment>
<comment type="pathway">
    <text evidence="1">Metabolic intermediate biosynthesis; chorismate biosynthesis; chorismate from D-erythrose 4-phosphate and phosphoenolpyruvate: step 5/7.</text>
</comment>
<comment type="subunit">
    <text evidence="1">Monomer.</text>
</comment>
<comment type="subcellular location">
    <subcellularLocation>
        <location evidence="1">Cytoplasm</location>
    </subcellularLocation>
</comment>
<comment type="similarity">
    <text evidence="1">Belongs to the shikimate kinase family.</text>
</comment>
<dbReference type="EC" id="2.7.1.71" evidence="1"/>
<dbReference type="EMBL" id="AE016828">
    <property type="protein sequence ID" value="AAO91383.1"/>
    <property type="molecule type" value="Genomic_DNA"/>
</dbReference>
<dbReference type="RefSeq" id="NP_820869.1">
    <property type="nucleotide sequence ID" value="NC_002971.4"/>
</dbReference>
<dbReference type="RefSeq" id="WP_010958519.1">
    <property type="nucleotide sequence ID" value="NZ_CCYB01000008.1"/>
</dbReference>
<dbReference type="PDB" id="3TRF">
    <property type="method" value="X-ray"/>
    <property type="resolution" value="2.60 A"/>
    <property type="chains" value="A/B=1-179"/>
</dbReference>
<dbReference type="PDBsum" id="3TRF"/>
<dbReference type="SMR" id="Q83AJ3"/>
<dbReference type="STRING" id="227377.CBU_1892"/>
<dbReference type="EnsemblBacteria" id="AAO91383">
    <property type="protein sequence ID" value="AAO91383"/>
    <property type="gene ID" value="CBU_1892"/>
</dbReference>
<dbReference type="GeneID" id="1209805"/>
<dbReference type="KEGG" id="cbu:CBU_1892"/>
<dbReference type="PATRIC" id="fig|227377.7.peg.1875"/>
<dbReference type="eggNOG" id="COG0703">
    <property type="taxonomic scope" value="Bacteria"/>
</dbReference>
<dbReference type="HOGENOM" id="CLU_057607_2_2_6"/>
<dbReference type="OrthoDB" id="9800332at2"/>
<dbReference type="UniPathway" id="UPA00053">
    <property type="reaction ID" value="UER00088"/>
</dbReference>
<dbReference type="EvolutionaryTrace" id="Q83AJ3"/>
<dbReference type="Proteomes" id="UP000002671">
    <property type="component" value="Chromosome"/>
</dbReference>
<dbReference type="GO" id="GO:0005829">
    <property type="term" value="C:cytosol"/>
    <property type="evidence" value="ECO:0000318"/>
    <property type="project" value="GO_Central"/>
</dbReference>
<dbReference type="GO" id="GO:0005524">
    <property type="term" value="F:ATP binding"/>
    <property type="evidence" value="ECO:0007669"/>
    <property type="project" value="UniProtKB-UniRule"/>
</dbReference>
<dbReference type="GO" id="GO:0000287">
    <property type="term" value="F:magnesium ion binding"/>
    <property type="evidence" value="ECO:0007669"/>
    <property type="project" value="UniProtKB-UniRule"/>
</dbReference>
<dbReference type="GO" id="GO:0004765">
    <property type="term" value="F:shikimate kinase activity"/>
    <property type="evidence" value="ECO:0000318"/>
    <property type="project" value="GO_Central"/>
</dbReference>
<dbReference type="GO" id="GO:0008652">
    <property type="term" value="P:amino acid biosynthetic process"/>
    <property type="evidence" value="ECO:0007669"/>
    <property type="project" value="UniProtKB-KW"/>
</dbReference>
<dbReference type="GO" id="GO:0009073">
    <property type="term" value="P:aromatic amino acid family biosynthetic process"/>
    <property type="evidence" value="ECO:0007669"/>
    <property type="project" value="UniProtKB-KW"/>
</dbReference>
<dbReference type="GO" id="GO:0009423">
    <property type="term" value="P:chorismate biosynthetic process"/>
    <property type="evidence" value="ECO:0007669"/>
    <property type="project" value="UniProtKB-UniRule"/>
</dbReference>
<dbReference type="CDD" id="cd00464">
    <property type="entry name" value="SK"/>
    <property type="match status" value="1"/>
</dbReference>
<dbReference type="FunFam" id="3.40.50.300:FF:003599">
    <property type="entry name" value="Shikimate kinase"/>
    <property type="match status" value="1"/>
</dbReference>
<dbReference type="Gene3D" id="3.40.50.300">
    <property type="entry name" value="P-loop containing nucleotide triphosphate hydrolases"/>
    <property type="match status" value="1"/>
</dbReference>
<dbReference type="HAMAP" id="MF_00109">
    <property type="entry name" value="Shikimate_kinase"/>
    <property type="match status" value="1"/>
</dbReference>
<dbReference type="InterPro" id="IPR027417">
    <property type="entry name" value="P-loop_NTPase"/>
</dbReference>
<dbReference type="InterPro" id="IPR031322">
    <property type="entry name" value="Shikimate/glucono_kinase"/>
</dbReference>
<dbReference type="InterPro" id="IPR000623">
    <property type="entry name" value="Shikimate_kinase/TSH1"/>
</dbReference>
<dbReference type="InterPro" id="IPR023000">
    <property type="entry name" value="Shikimate_kinase_CS"/>
</dbReference>
<dbReference type="PANTHER" id="PTHR21087">
    <property type="entry name" value="SHIKIMATE KINASE"/>
    <property type="match status" value="1"/>
</dbReference>
<dbReference type="PANTHER" id="PTHR21087:SF16">
    <property type="entry name" value="SHIKIMATE KINASE 1, CHLOROPLASTIC"/>
    <property type="match status" value="1"/>
</dbReference>
<dbReference type="Pfam" id="PF01202">
    <property type="entry name" value="SKI"/>
    <property type="match status" value="1"/>
</dbReference>
<dbReference type="PRINTS" id="PR01100">
    <property type="entry name" value="SHIKIMTKNASE"/>
</dbReference>
<dbReference type="SUPFAM" id="SSF52540">
    <property type="entry name" value="P-loop containing nucleoside triphosphate hydrolases"/>
    <property type="match status" value="1"/>
</dbReference>
<dbReference type="PROSITE" id="PS01128">
    <property type="entry name" value="SHIKIMATE_KINASE"/>
    <property type="match status" value="1"/>
</dbReference>
<protein>
    <recommendedName>
        <fullName evidence="1">Shikimate kinase</fullName>
        <shortName evidence="1">SK</shortName>
        <ecNumber evidence="1">2.7.1.71</ecNumber>
    </recommendedName>
</protein>
<reference key="1">
    <citation type="journal article" date="2003" name="Proc. Natl. Acad. Sci. U.S.A.">
        <title>Complete genome sequence of the Q-fever pathogen, Coxiella burnetii.</title>
        <authorList>
            <person name="Seshadri R."/>
            <person name="Paulsen I.T."/>
            <person name="Eisen J.A."/>
            <person name="Read T.D."/>
            <person name="Nelson K.E."/>
            <person name="Nelson W.C."/>
            <person name="Ward N.L."/>
            <person name="Tettelin H."/>
            <person name="Davidsen T.M."/>
            <person name="Beanan M.J."/>
            <person name="DeBoy R.T."/>
            <person name="Daugherty S.C."/>
            <person name="Brinkac L.M."/>
            <person name="Madupu R."/>
            <person name="Dodson R.J."/>
            <person name="Khouri H.M."/>
            <person name="Lee K.H."/>
            <person name="Carty H.A."/>
            <person name="Scanlan D."/>
            <person name="Heinzen R.A."/>
            <person name="Thompson H.A."/>
            <person name="Samuel J.E."/>
            <person name="Fraser C.M."/>
            <person name="Heidelberg J.F."/>
        </authorList>
    </citation>
    <scope>NUCLEOTIDE SEQUENCE [LARGE SCALE GENOMIC DNA]</scope>
    <source>
        <strain>RSA 493 / Nine Mile phase I</strain>
    </source>
</reference>
<feature type="chain" id="PRO_0000237869" description="Shikimate kinase">
    <location>
        <begin position="1"/>
        <end position="179"/>
    </location>
</feature>
<feature type="binding site" evidence="1">
    <location>
        <begin position="15"/>
        <end position="20"/>
    </location>
    <ligand>
        <name>ATP</name>
        <dbReference type="ChEBI" id="CHEBI:30616"/>
    </ligand>
</feature>
<feature type="binding site" evidence="1">
    <location>
        <position position="19"/>
    </location>
    <ligand>
        <name>Mg(2+)</name>
        <dbReference type="ChEBI" id="CHEBI:18420"/>
    </ligand>
</feature>
<feature type="binding site" evidence="1">
    <location>
        <position position="37"/>
    </location>
    <ligand>
        <name>substrate</name>
    </ligand>
</feature>
<feature type="binding site" evidence="1">
    <location>
        <position position="61"/>
    </location>
    <ligand>
        <name>substrate</name>
    </ligand>
</feature>
<feature type="binding site" evidence="1">
    <location>
        <position position="83"/>
    </location>
    <ligand>
        <name>substrate</name>
    </ligand>
</feature>
<feature type="binding site" evidence="1">
    <location>
        <position position="123"/>
    </location>
    <ligand>
        <name>ATP</name>
        <dbReference type="ChEBI" id="CHEBI:30616"/>
    </ligand>
</feature>
<feature type="binding site" evidence="1">
    <location>
        <position position="142"/>
    </location>
    <ligand>
        <name>substrate</name>
    </ligand>
</feature>
<feature type="strand" evidence="2">
    <location>
        <begin position="7"/>
        <end position="11"/>
    </location>
</feature>
<feature type="helix" evidence="2">
    <location>
        <begin position="18"/>
        <end position="29"/>
    </location>
</feature>
<feature type="strand" evidence="2">
    <location>
        <begin position="33"/>
        <end position="35"/>
    </location>
</feature>
<feature type="helix" evidence="2">
    <location>
        <begin position="36"/>
        <end position="44"/>
    </location>
</feature>
<feature type="helix" evidence="2">
    <location>
        <begin position="48"/>
        <end position="73"/>
    </location>
</feature>
<feature type="strand" evidence="2">
    <location>
        <begin position="74"/>
        <end position="76"/>
    </location>
</feature>
<feature type="strand" evidence="2">
    <location>
        <begin position="78"/>
        <end position="80"/>
    </location>
</feature>
<feature type="helix" evidence="2">
    <location>
        <begin position="85"/>
        <end position="87"/>
    </location>
</feature>
<feature type="helix" evidence="2">
    <location>
        <begin position="89"/>
        <end position="98"/>
    </location>
</feature>
<feature type="strand" evidence="2">
    <location>
        <begin position="99"/>
        <end position="105"/>
    </location>
</feature>
<feature type="helix" evidence="2">
    <location>
        <begin position="108"/>
        <end position="116"/>
    </location>
</feature>
<feature type="helix" evidence="2">
    <location>
        <begin position="129"/>
        <end position="149"/>
    </location>
</feature>
<feature type="strand" evidence="2">
    <location>
        <begin position="151"/>
        <end position="155"/>
    </location>
</feature>
<feature type="helix" evidence="2">
    <location>
        <begin position="161"/>
        <end position="171"/>
    </location>
</feature>